<comment type="function">
    <text evidence="1">Probable GPI-anchored aspartic-type endopeptidase which contributes to virulence.</text>
</comment>
<comment type="subcellular location">
    <subcellularLocation>
        <location evidence="6">Cell membrane</location>
        <topology evidence="6">Lipid-anchor</topology>
        <topology evidence="6">GPI-anchor</topology>
    </subcellularLocation>
</comment>
<comment type="similarity">
    <text evidence="6">Belongs to the peptidase A1 family.</text>
</comment>
<evidence type="ECO:0000250" key="1"/>
<evidence type="ECO:0000255" key="2"/>
<evidence type="ECO:0000255" key="3">
    <source>
        <dbReference type="PROSITE-ProRule" id="PRU01103"/>
    </source>
</evidence>
<evidence type="ECO:0000255" key="4">
    <source>
        <dbReference type="PROSITE-ProRule" id="PRU10094"/>
    </source>
</evidence>
<evidence type="ECO:0000256" key="5">
    <source>
        <dbReference type="SAM" id="MobiDB-lite"/>
    </source>
</evidence>
<evidence type="ECO:0000305" key="6"/>
<proteinExistence type="inferred from homology"/>
<keyword id="KW-0064">Aspartyl protease</keyword>
<keyword id="KW-1003">Cell membrane</keyword>
<keyword id="KW-0325">Glycoprotein</keyword>
<keyword id="KW-0336">GPI-anchor</keyword>
<keyword id="KW-0378">Hydrolase</keyword>
<keyword id="KW-0449">Lipoprotein</keyword>
<keyword id="KW-0472">Membrane</keyword>
<keyword id="KW-0645">Protease</keyword>
<keyword id="KW-1185">Reference proteome</keyword>
<keyword id="KW-0732">Signal</keyword>
<keyword id="KW-0843">Virulence</keyword>
<protein>
    <recommendedName>
        <fullName>Probable aspartic-type endopeptidase CTSD</fullName>
        <ecNumber>3.4.23.-</ecNumber>
    </recommendedName>
</protein>
<organism>
    <name type="scientific">Arthroderma benhamiae (strain ATCC MYA-4681 / CBS 112371)</name>
    <name type="common">Trichophyton mentagrophytes</name>
    <dbReference type="NCBI Taxonomy" id="663331"/>
    <lineage>
        <taxon>Eukaryota</taxon>
        <taxon>Fungi</taxon>
        <taxon>Dikarya</taxon>
        <taxon>Ascomycota</taxon>
        <taxon>Pezizomycotina</taxon>
        <taxon>Eurotiomycetes</taxon>
        <taxon>Eurotiomycetidae</taxon>
        <taxon>Onygenales</taxon>
        <taxon>Arthrodermataceae</taxon>
        <taxon>Trichophyton</taxon>
    </lineage>
</organism>
<gene>
    <name type="primary">CTSD</name>
    <name type="ORF">ARB_01619</name>
</gene>
<name>CTSD_ARTBC</name>
<reference key="1">
    <citation type="journal article" date="2011" name="Genome Biol.">
        <title>Comparative and functional genomics provide insights into the pathogenicity of dermatophytic fungi.</title>
        <authorList>
            <person name="Burmester A."/>
            <person name="Shelest E."/>
            <person name="Gloeckner G."/>
            <person name="Heddergott C."/>
            <person name="Schindler S."/>
            <person name="Staib P."/>
            <person name="Heidel A."/>
            <person name="Felder M."/>
            <person name="Petzold A."/>
            <person name="Szafranski K."/>
            <person name="Feuermann M."/>
            <person name="Pedruzzi I."/>
            <person name="Priebe S."/>
            <person name="Groth M."/>
            <person name="Winkler R."/>
            <person name="Li W."/>
            <person name="Kniemeyer O."/>
            <person name="Schroeckh V."/>
            <person name="Hertweck C."/>
            <person name="Hube B."/>
            <person name="White T.C."/>
            <person name="Platzer M."/>
            <person name="Guthke R."/>
            <person name="Heitman J."/>
            <person name="Woestemeyer J."/>
            <person name="Zipfel P.F."/>
            <person name="Monod M."/>
            <person name="Brakhage A.A."/>
        </authorList>
    </citation>
    <scope>NUCLEOTIDE SEQUENCE [LARGE SCALE GENOMIC DNA]</scope>
    <source>
        <strain>ATCC MYA-4681 / CBS 112371</strain>
    </source>
</reference>
<dbReference type="EC" id="3.4.23.-"/>
<dbReference type="EMBL" id="ABSU01000021">
    <property type="protein sequence ID" value="EFE31471.1"/>
    <property type="molecule type" value="Genomic_DNA"/>
</dbReference>
<dbReference type="RefSeq" id="XP_003012111.1">
    <property type="nucleotide sequence ID" value="XM_003012065.1"/>
</dbReference>
<dbReference type="SMR" id="D4AZK1"/>
<dbReference type="STRING" id="663331.D4AZK1"/>
<dbReference type="MEROPS" id="A01.077"/>
<dbReference type="GlyCosmos" id="D4AZK1">
    <property type="glycosylation" value="3 sites, No reported glycans"/>
</dbReference>
<dbReference type="GeneID" id="9519598"/>
<dbReference type="KEGG" id="abe:ARB_01619"/>
<dbReference type="eggNOG" id="KOG1339">
    <property type="taxonomic scope" value="Eukaryota"/>
</dbReference>
<dbReference type="HOGENOM" id="CLU_013253_10_0_1"/>
<dbReference type="OMA" id="ELFCQQH"/>
<dbReference type="Proteomes" id="UP000008866">
    <property type="component" value="Unassembled WGS sequence"/>
</dbReference>
<dbReference type="GO" id="GO:0005886">
    <property type="term" value="C:plasma membrane"/>
    <property type="evidence" value="ECO:0007669"/>
    <property type="project" value="UniProtKB-SubCell"/>
</dbReference>
<dbReference type="GO" id="GO:0098552">
    <property type="term" value="C:side of membrane"/>
    <property type="evidence" value="ECO:0007669"/>
    <property type="project" value="UniProtKB-KW"/>
</dbReference>
<dbReference type="GO" id="GO:0004190">
    <property type="term" value="F:aspartic-type endopeptidase activity"/>
    <property type="evidence" value="ECO:0007669"/>
    <property type="project" value="UniProtKB-KW"/>
</dbReference>
<dbReference type="GO" id="GO:0006508">
    <property type="term" value="P:proteolysis"/>
    <property type="evidence" value="ECO:0007669"/>
    <property type="project" value="UniProtKB-KW"/>
</dbReference>
<dbReference type="CDD" id="cd05471">
    <property type="entry name" value="pepsin_like"/>
    <property type="match status" value="1"/>
</dbReference>
<dbReference type="FunFam" id="2.40.70.10:FF:000085">
    <property type="entry name" value="Aspartic-type endopeptidase (CtsD), putative"/>
    <property type="match status" value="1"/>
</dbReference>
<dbReference type="FunFam" id="2.40.70.10:FF:000060">
    <property type="entry name" value="Aspartic-type endopeptidase ctsD"/>
    <property type="match status" value="1"/>
</dbReference>
<dbReference type="Gene3D" id="2.40.70.10">
    <property type="entry name" value="Acid Proteases"/>
    <property type="match status" value="2"/>
</dbReference>
<dbReference type="InterPro" id="IPR001461">
    <property type="entry name" value="Aspartic_peptidase_A1"/>
</dbReference>
<dbReference type="InterPro" id="IPR001969">
    <property type="entry name" value="Aspartic_peptidase_AS"/>
</dbReference>
<dbReference type="InterPro" id="IPR034164">
    <property type="entry name" value="Pepsin-like_dom"/>
</dbReference>
<dbReference type="InterPro" id="IPR033121">
    <property type="entry name" value="PEPTIDASE_A1"/>
</dbReference>
<dbReference type="InterPro" id="IPR021109">
    <property type="entry name" value="Peptidase_aspartic_dom_sf"/>
</dbReference>
<dbReference type="PANTHER" id="PTHR47966">
    <property type="entry name" value="BETA-SITE APP-CLEAVING ENZYME, ISOFORM A-RELATED"/>
    <property type="match status" value="1"/>
</dbReference>
<dbReference type="PANTHER" id="PTHR47966:SF75">
    <property type="entry name" value="ENDOPEPTIDASE (CTSD), PUTATIVE (AFU_ORTHOLOGUE AFUA_4G07040)-RELATED"/>
    <property type="match status" value="1"/>
</dbReference>
<dbReference type="Pfam" id="PF00026">
    <property type="entry name" value="Asp"/>
    <property type="match status" value="1"/>
</dbReference>
<dbReference type="PRINTS" id="PR00792">
    <property type="entry name" value="PEPSIN"/>
</dbReference>
<dbReference type="SUPFAM" id="SSF50630">
    <property type="entry name" value="Acid proteases"/>
    <property type="match status" value="1"/>
</dbReference>
<dbReference type="PROSITE" id="PS00141">
    <property type="entry name" value="ASP_PROTEASE"/>
    <property type="match status" value="1"/>
</dbReference>
<dbReference type="PROSITE" id="PS51767">
    <property type="entry name" value="PEPTIDASE_A1"/>
    <property type="match status" value="1"/>
</dbReference>
<sequence length="509" mass="54651">MQFLWLCLLSAVTLQFTGTLAFYPIKLPDFTKGIISHHGSVGRRFFTFPGLYKHAHTGSTTLNIRRGPSNYRRDNNYPAQIASPPTAPNTLGINNDGYDFSYFSEVKVGSEGQKMWMLIDTGASGTWVFGSDCTSKACGRHNTFGKEDSKTIKVTDEKWGVTYGTGKVSGVIVNDTMSFAGFELVTPFGSASTASDDFLNYPMDGILGIGPQDPNAKTPTVVQLLMQQKLLKSNVIGINLQRASEGATDGQITFGDIDKSKFSGELIYSNVVPNGYQWEIAMDDLIMDGKSLNLKGRTGIIDTGTSFLILPPADADLIHSMIPQADKGSGFYTLPCSTKVDIKLSIGGVEYTIQPDDYVGNETATKGTCNSLIVGRQILGPKQWLVGDVFLKNVYSVFDFDKNRVGLAARKYAGTKNPPSSTPSPGMFLLHAIHCQKTISVLMLHIDPTSNKAPSGGSPGLPAESGSDSTTNGEATNGATSSPNSSSSVLTPTWLTLAVFFAIGSSLWS</sequence>
<feature type="signal peptide" evidence="2">
    <location>
        <begin position="1"/>
        <end position="21"/>
    </location>
</feature>
<feature type="chain" id="PRO_0000397698" description="Probable aspartic-type endopeptidase CTSD">
    <location>
        <begin position="22"/>
        <end position="485"/>
    </location>
</feature>
<feature type="propeptide" id="PRO_0000397699" description="Removed in mature form" evidence="2">
    <location>
        <begin position="486"/>
        <end position="509"/>
    </location>
</feature>
<feature type="domain" description="Peptidase A1" evidence="3">
    <location>
        <begin position="102"/>
        <end position="408"/>
    </location>
</feature>
<feature type="region of interest" description="Disordered" evidence="5">
    <location>
        <begin position="451"/>
        <end position="489"/>
    </location>
</feature>
<feature type="compositionally biased region" description="Polar residues" evidence="5">
    <location>
        <begin position="466"/>
        <end position="480"/>
    </location>
</feature>
<feature type="active site" evidence="4">
    <location>
        <position position="120"/>
    </location>
</feature>
<feature type="active site" evidence="4">
    <location>
        <position position="302"/>
    </location>
</feature>
<feature type="lipid moiety-binding region" description="GPI-anchor amidated serine" evidence="2">
    <location>
        <position position="485"/>
    </location>
</feature>
<feature type="glycosylation site" description="N-linked (GlcNAc...) asparagine" evidence="2">
    <location>
        <position position="174"/>
    </location>
</feature>
<feature type="glycosylation site" description="N-linked (GlcNAc...) asparagine" evidence="2">
    <location>
        <position position="361"/>
    </location>
</feature>
<feature type="glycosylation site" description="N-linked (GlcNAc...) asparagine" evidence="2">
    <location>
        <position position="484"/>
    </location>
</feature>
<accession>D4AZK1</accession>